<protein>
    <recommendedName>
        <fullName>Sodium/hydrogen exchanger 7</fullName>
    </recommendedName>
    <alternativeName>
        <fullName>Na(+)/H(+) exchanger 7</fullName>
        <shortName>NHE-7</shortName>
    </alternativeName>
    <alternativeName>
        <fullName>Protein SALT OVERLY SENSITIVE 1</fullName>
    </alternativeName>
</protein>
<evidence type="ECO:0000255" key="1"/>
<evidence type="ECO:0000256" key="2">
    <source>
        <dbReference type="SAM" id="MobiDB-lite"/>
    </source>
</evidence>
<evidence type="ECO:0000269" key="3">
    <source>
    </source>
</evidence>
<evidence type="ECO:0000269" key="4">
    <source>
    </source>
</evidence>
<evidence type="ECO:0000269" key="5">
    <source>
    </source>
</evidence>
<evidence type="ECO:0000269" key="6">
    <source>
    </source>
</evidence>
<evidence type="ECO:0000269" key="7">
    <source>
    </source>
</evidence>
<evidence type="ECO:0000269" key="8">
    <source>
    </source>
</evidence>
<evidence type="ECO:0000269" key="9">
    <source>
    </source>
</evidence>
<evidence type="ECO:0000305" key="10"/>
<evidence type="ECO:0007829" key="11">
    <source>
        <dbReference type="PDB" id="7Y3E"/>
    </source>
</evidence>
<evidence type="ECO:0007829" key="12">
    <source>
        <dbReference type="PDB" id="8HYA"/>
    </source>
</evidence>
<evidence type="ECO:0007829" key="13">
    <source>
        <dbReference type="PDB" id="8JD9"/>
    </source>
</evidence>
<sequence>MTTVIDATMAYRFLEEATDSSSSSSSSKLESSPVDAVLFVGMSLVLGIASRHLLRGTRVPYTVALLVIGIALGSLEYGAKHNLGKIGHGIRIWNEIDPELLLAVFLPALLFESSFSMEVHQIKRCLGQMVLLAVPGVLISTACLGSLVKVTFPYEWDWKTSLLLGGLLSATDPVAVVALLKELGASKKLSTIIEGESLMNDGTAIVVFQLFLKMAMGQNSDWSSIIKFLLKVALGAVGIGLAFGIASVIWLKFIFNDTVIEITLTIAVSYFAYYTAQEWAGASGVLTVMTLGMFYAAFARTAFKGDSQKSLHHFWEMVAYIANTLIFILSGVVIAEGILDSDKIAYQGNSWRFLFLLYVYIQLSRVVVVGVLYPLLCRFGYGLDWKESIILVWSGLRGAVALALSLSVKQSSGNSHISKETGTLFLFFTGGIVFLTLIVNGSTTQFVLRLLRMDILPAPKKRILEYTKYEMLNKALRAFQDLGDDEELGPADWPTVESYISSLKGSEGELVHHPHNGSKIGSLDPKSLKDIRMRFLNGVQATYWEMLDEGRISEVTANILMQSVDEALDQVSTTLCDWRGLKPHVNFPNYYNFLHSKVVPRKLVTYFAVERLESACYISAAFLRAHTIARQQLYDFLGESNIGSIVINESEKEGEEAKKFLEKVRSSFPQVLRVVKTKQVTYSVLNHLLGYIENLEKVGLLEEKEIAHLHDAVQTGLKKLLRNPPIVKLPKLSDMITSHPLSVALPPAFCEPLKHSKKEPMKLRGVTLYKEGSKPTGVWLIFDGIVKWKSKILSNNHSLHPTFSHGSTLGLYEVLTGKPYLCDLITDSMVLCFFIDSEKILSLQSDSTIDDFLWQESALVLLKLLRPQIFESVAMQELRALVSTESSKLTTYVTGESIEIDCNSIGLLLEGFVKPVGIKEELISSPAALSPSNGNQSFHNSSEASGIMRVSFSQQATQYIVETRARAIIFNIGAFGADRTLHRRPSSLTPPRSSSSDQLQRSFRKEHRGLMSWPENIYAKQQQEINKTTLSLSERAMQLSIFGSMVNVYRRSVSFGGIYNNKLQDNLLYKKLPLNPAQGLVSAKSESSIVTKKQLETRKHACQLPLKGESSTRQNTMVESSDEEDEDEGIVVRIDSPSKIVFRNDL</sequence>
<comment type="function">
    <text evidence="3 4 5 7 8 9">Acts in electroneutral exchange of protons for cations such as Na(+) or Li(+) across plasma membrane. Involved in Na(+) and K(+) homeostasis. Required for cytoplasmic Na(+) and Li(+) detoxification by secreting them from the cytoplasm to the extracellular space. Regulates Na(+) content of the xylem sap.</text>
</comment>
<comment type="catalytic activity">
    <reaction evidence="7">
        <text>Na(+)(in) + H(+)(out) = Na(+)(out) + H(+)(in)</text>
        <dbReference type="Rhea" id="RHEA:29419"/>
        <dbReference type="ChEBI" id="CHEBI:15378"/>
        <dbReference type="ChEBI" id="CHEBI:29101"/>
    </reaction>
</comment>
<comment type="catalytic activity">
    <reaction evidence="7">
        <text>K(+)(in) + H(+)(out) = K(+)(out) + H(+)(in)</text>
        <dbReference type="Rhea" id="RHEA:29467"/>
        <dbReference type="ChEBI" id="CHEBI:15378"/>
        <dbReference type="ChEBI" id="CHEBI:29103"/>
    </reaction>
</comment>
<comment type="biophysicochemical properties">
    <kinetics>
        <KM evidence="9">22.8 mM for Na(+)</KM>
    </kinetics>
</comment>
<comment type="subunit">
    <text evidence="6">Interacts with CIPK24/SOS2 and CBL4/SOS3.</text>
</comment>
<comment type="interaction">
    <interactant intactId="EBI-2368285">
        <id>Q9LKW9</id>
    </interactant>
    <interactant intactId="EBI-537551">
        <id>Q9LDI3</id>
        <label>CIPK24</label>
    </interactant>
    <organismsDiffer>false</organismsDiffer>
    <experiments>4</experiments>
</comment>
<comment type="interaction">
    <interactant intactId="EBI-2368285">
        <id>Q9LKW9</id>
    </interactant>
    <interactant intactId="EBI-2118043">
        <id>Q8RY59</id>
        <label>RCD1</label>
    </interactant>
    <organismsDiffer>false</organismsDiffer>
    <experiments>5</experiments>
</comment>
<comment type="subcellular location">
    <subcellularLocation>
        <location evidence="4 9">Cell membrane</location>
        <topology evidence="4 9">Multi-pass membrane protein</topology>
    </subcellularLocation>
</comment>
<comment type="tissue specificity">
    <text evidence="3 4">More expressed in roots than in shoots. Mostly localized in parenchyma cells at the xylem/symplast boundary in roots, hypocotyls, stems and leaves. Also present in root tips epidermal cells.</text>
</comment>
<comment type="induction">
    <text evidence="3 4">By Na(+), in a SOS signaling pathway-dependent manner.</text>
</comment>
<comment type="PTM">
    <text evidence="6">Phosphorylated by CIPK24/SOS2 in complex with CBL4/SOS3.</text>
</comment>
<comment type="miscellaneous">
    <text>Positively regulated by the salt overly sensitive (SOS) signaling pathway that involves the kinase CIPK24/SOS2 and the calcium sensor CBL4/SOS3.</text>
</comment>
<comment type="miscellaneous">
    <text>Transgenic plants that overexpress NHX7 have enhanced capability to grow on high saline soils.</text>
</comment>
<comment type="similarity">
    <text evidence="10">Belongs to the monovalent cation:proton antiporter 1 (CPA1) transporter (TC 2.A.36) family.</text>
</comment>
<comment type="sequence caution" evidence="10">
    <conflict type="erroneous gene model prediction">
        <sequence resource="EMBL-CDS" id="AAD20091"/>
    </conflict>
</comment>
<feature type="chain" id="PRO_0000052378" description="Sodium/hydrogen exchanger 7">
    <location>
        <begin position="1"/>
        <end position="1146"/>
    </location>
</feature>
<feature type="topological domain" description="Extracellular" evidence="1">
    <location>
        <begin position="1"/>
        <end position="28"/>
    </location>
</feature>
<feature type="transmembrane region" description="Helical" evidence="1">
    <location>
        <begin position="29"/>
        <end position="49"/>
    </location>
</feature>
<feature type="topological domain" description="Cytoplasmic" evidence="1">
    <location>
        <begin position="50"/>
        <end position="58"/>
    </location>
</feature>
<feature type="transmembrane region" description="Helical" evidence="1">
    <location>
        <begin position="59"/>
        <end position="79"/>
    </location>
</feature>
<feature type="topological domain" description="Extracellular" evidence="1">
    <location>
        <begin position="80"/>
        <end position="99"/>
    </location>
</feature>
<feature type="transmembrane region" description="Helical" evidence="1">
    <location>
        <begin position="100"/>
        <end position="120"/>
    </location>
</feature>
<feature type="topological domain" description="Cytoplasmic" evidence="1">
    <location>
        <begin position="121"/>
        <end position="127"/>
    </location>
</feature>
<feature type="transmembrane region" description="Helical" evidence="1">
    <location>
        <begin position="128"/>
        <end position="148"/>
    </location>
</feature>
<feature type="topological domain" description="Extracellular" evidence="1">
    <location>
        <begin position="149"/>
        <end position="159"/>
    </location>
</feature>
<feature type="transmembrane region" description="Helical" evidence="1">
    <location>
        <begin position="160"/>
        <end position="180"/>
    </location>
</feature>
<feature type="topological domain" description="Cytoplasmic" evidence="1">
    <location>
        <begin position="181"/>
        <end position="191"/>
    </location>
</feature>
<feature type="transmembrane region" description="Helical" evidence="1">
    <location>
        <begin position="192"/>
        <end position="212"/>
    </location>
</feature>
<feature type="topological domain" description="Extracellular" evidence="1">
    <location>
        <begin position="213"/>
        <end position="227"/>
    </location>
</feature>
<feature type="transmembrane region" description="Helical" evidence="1">
    <location>
        <begin position="228"/>
        <end position="250"/>
    </location>
</feature>
<feature type="topological domain" description="Cytoplasmic" evidence="1">
    <location>
        <begin position="251"/>
        <end position="253"/>
    </location>
</feature>
<feature type="transmembrane region" description="Helical" evidence="1">
    <location>
        <begin position="254"/>
        <end position="273"/>
    </location>
</feature>
<feature type="topological domain" description="Extracellular" evidence="1">
    <location>
        <begin position="274"/>
        <end position="278"/>
    </location>
</feature>
<feature type="transmembrane region" description="Helical" evidence="1">
    <location>
        <begin position="279"/>
        <end position="299"/>
    </location>
</feature>
<feature type="topological domain" description="Cytoplasmic" evidence="1">
    <location>
        <begin position="300"/>
        <end position="313"/>
    </location>
</feature>
<feature type="transmembrane region" description="Helical" evidence="1">
    <location>
        <begin position="314"/>
        <end position="334"/>
    </location>
</feature>
<feature type="topological domain" description="Extracellular" evidence="1">
    <location>
        <begin position="335"/>
        <end position="352"/>
    </location>
</feature>
<feature type="transmembrane region" description="Helical" evidence="1">
    <location>
        <begin position="353"/>
        <end position="373"/>
    </location>
</feature>
<feature type="topological domain" description="Cytoplasmic" evidence="1">
    <location>
        <begin position="374"/>
        <end position="387"/>
    </location>
</feature>
<feature type="transmembrane region" description="Helical" evidence="1">
    <location>
        <begin position="388"/>
        <end position="408"/>
    </location>
</feature>
<feature type="topological domain" description="Extracellular" evidence="1">
    <location>
        <begin position="409"/>
        <end position="420"/>
    </location>
</feature>
<feature type="transmembrane region" description="Helical" evidence="1">
    <location>
        <begin position="421"/>
        <end position="441"/>
    </location>
</feature>
<feature type="topological domain" description="Cytoplasmic" evidence="1">
    <location>
        <begin position="442"/>
        <end position="1146"/>
    </location>
</feature>
<feature type="region of interest" description="Disordered" evidence="2">
    <location>
        <begin position="981"/>
        <end position="1001"/>
    </location>
</feature>
<feature type="region of interest" description="Disordered" evidence="2">
    <location>
        <begin position="1102"/>
        <end position="1128"/>
    </location>
</feature>
<feature type="compositionally biased region" description="Low complexity" evidence="2">
    <location>
        <begin position="986"/>
        <end position="996"/>
    </location>
</feature>
<feature type="compositionally biased region" description="Polar residues" evidence="2">
    <location>
        <begin position="1109"/>
        <end position="1118"/>
    </location>
</feature>
<feature type="mutagenesis site" description="In sos1-12; hypersensitivity to Na(+) and Li(+)." evidence="3">
    <original>G</original>
    <variation>E</variation>
    <location>
        <position position="136"/>
    </location>
</feature>
<feature type="mutagenesis site" description="In sos1-3; hypersensitivity to Na(+) and Li(+)." evidence="3 7">
    <original>R</original>
    <variation>C</variation>
    <location>
        <position position="365"/>
    </location>
</feature>
<feature type="mutagenesis site" description="In sos1-8; hypersensitivity to Na(+) and Li(+)." evidence="3">
    <original>G</original>
    <variation>E</variation>
    <location>
        <position position="777"/>
    </location>
</feature>
<feature type="mutagenesis site" description="In sos1-9; hypersensitivity to Na(+) and Li(+)." evidence="3">
    <original>G</original>
    <variation>D</variation>
    <location>
        <position position="784"/>
    </location>
</feature>
<feature type="helix" evidence="11">
    <location>
        <begin position="35"/>
        <end position="53"/>
    </location>
</feature>
<feature type="turn" evidence="11">
    <location>
        <begin position="54"/>
        <end position="56"/>
    </location>
</feature>
<feature type="strand" evidence="11">
    <location>
        <begin position="57"/>
        <end position="59"/>
    </location>
</feature>
<feature type="helix" evidence="11">
    <location>
        <begin position="61"/>
        <end position="77"/>
    </location>
</feature>
<feature type="helix" evidence="11">
    <location>
        <begin position="85"/>
        <end position="94"/>
    </location>
</feature>
<feature type="helix" evidence="11">
    <location>
        <begin position="98"/>
        <end position="115"/>
    </location>
</feature>
<feature type="helix" evidence="11">
    <location>
        <begin position="119"/>
        <end position="150"/>
    </location>
</feature>
<feature type="helix" evidence="11">
    <location>
        <begin position="158"/>
        <end position="167"/>
    </location>
</feature>
<feature type="helix" evidence="11">
    <location>
        <begin position="173"/>
        <end position="183"/>
    </location>
</feature>
<feature type="helix" evidence="11">
    <location>
        <begin position="187"/>
        <end position="215"/>
    </location>
</feature>
<feature type="strand" evidence="12">
    <location>
        <begin position="216"/>
        <end position="218"/>
    </location>
</feature>
<feature type="helix" evidence="11">
    <location>
        <begin position="222"/>
        <end position="252"/>
    </location>
</feature>
<feature type="helix" evidence="11">
    <location>
        <begin position="260"/>
        <end position="277"/>
    </location>
</feature>
<feature type="strand" evidence="13">
    <location>
        <begin position="278"/>
        <end position="280"/>
    </location>
</feature>
<feature type="helix" evidence="11">
    <location>
        <begin position="284"/>
        <end position="298"/>
    </location>
</feature>
<feature type="turn" evidence="11">
    <location>
        <begin position="300"/>
        <end position="302"/>
    </location>
</feature>
<feature type="helix" evidence="11">
    <location>
        <begin position="307"/>
        <end position="338"/>
    </location>
</feature>
<feature type="strand" evidence="11">
    <location>
        <begin position="340"/>
        <end position="342"/>
    </location>
</feature>
<feature type="helix" evidence="11">
    <location>
        <begin position="344"/>
        <end position="346"/>
    </location>
</feature>
<feature type="helix" evidence="11">
    <location>
        <begin position="349"/>
        <end position="376"/>
    </location>
</feature>
<feature type="strand" evidence="11">
    <location>
        <begin position="379"/>
        <end position="381"/>
    </location>
</feature>
<feature type="helix" evidence="11">
    <location>
        <begin position="385"/>
        <end position="393"/>
    </location>
</feature>
<feature type="helix" evidence="11">
    <location>
        <begin position="399"/>
        <end position="410"/>
    </location>
</feature>
<feature type="strand" evidence="11">
    <location>
        <begin position="413"/>
        <end position="417"/>
    </location>
</feature>
<feature type="helix" evidence="11">
    <location>
        <begin position="419"/>
        <end position="441"/>
    </location>
</feature>
<feature type="helix" evidence="11">
    <location>
        <begin position="444"/>
        <end position="449"/>
    </location>
</feature>
<feature type="helix" evidence="11">
    <location>
        <begin position="450"/>
        <end position="452"/>
    </location>
</feature>
<feature type="helix" evidence="11">
    <location>
        <begin position="458"/>
        <end position="481"/>
    </location>
</feature>
<feature type="strand" evidence="11">
    <location>
        <begin position="486"/>
        <end position="488"/>
    </location>
</feature>
<feature type="helix" evidence="11">
    <location>
        <begin position="493"/>
        <end position="499"/>
    </location>
</feature>
<feature type="turn" evidence="11">
    <location>
        <begin position="500"/>
        <end position="502"/>
    </location>
</feature>
<feature type="helix" evidence="11">
    <location>
        <begin position="528"/>
        <end position="548"/>
    </location>
</feature>
<feature type="helix" evidence="11">
    <location>
        <begin position="554"/>
        <end position="567"/>
    </location>
</feature>
<feature type="turn" evidence="13">
    <location>
        <begin position="570"/>
        <end position="573"/>
    </location>
</feature>
<feature type="turn" evidence="11">
    <location>
        <begin position="577"/>
        <end position="581"/>
    </location>
</feature>
<feature type="helix" evidence="11">
    <location>
        <begin position="582"/>
        <end position="584"/>
    </location>
</feature>
<feature type="helix" evidence="11">
    <location>
        <begin position="591"/>
        <end position="593"/>
    </location>
</feature>
<feature type="turn" evidence="11">
    <location>
        <begin position="594"/>
        <end position="596"/>
    </location>
</feature>
<feature type="turn" evidence="11">
    <location>
        <begin position="598"/>
        <end position="600"/>
    </location>
</feature>
<feature type="strand" evidence="11">
    <location>
        <begin position="601"/>
        <end position="603"/>
    </location>
</feature>
<feature type="helix" evidence="11">
    <location>
        <begin position="604"/>
        <end position="637"/>
    </location>
</feature>
<feature type="helix" evidence="11">
    <location>
        <begin position="641"/>
        <end position="653"/>
    </location>
</feature>
<feature type="helix" evidence="11">
    <location>
        <begin position="655"/>
        <end position="667"/>
    </location>
</feature>
<feature type="helix" evidence="11">
    <location>
        <begin position="671"/>
        <end position="698"/>
    </location>
</feature>
<feature type="helix" evidence="11">
    <location>
        <begin position="705"/>
        <end position="722"/>
    </location>
</feature>
<feature type="helix" evidence="11">
    <location>
        <begin position="732"/>
        <end position="737"/>
    </location>
</feature>
<feature type="helix" evidence="11">
    <location>
        <begin position="740"/>
        <end position="743"/>
    </location>
</feature>
<feature type="helix" evidence="11">
    <location>
        <begin position="747"/>
        <end position="750"/>
    </location>
</feature>
<feature type="turn" evidence="11">
    <location>
        <begin position="753"/>
        <end position="755"/>
    </location>
</feature>
<feature type="strand" evidence="11">
    <location>
        <begin position="767"/>
        <end position="769"/>
    </location>
</feature>
<feature type="strand" evidence="11">
    <location>
        <begin position="777"/>
        <end position="784"/>
    </location>
</feature>
<feature type="strand" evidence="11">
    <location>
        <begin position="786"/>
        <end position="789"/>
    </location>
</feature>
<feature type="strand" evidence="11">
    <location>
        <begin position="791"/>
        <end position="793"/>
    </location>
</feature>
<feature type="strand" evidence="11">
    <location>
        <begin position="805"/>
        <end position="809"/>
    </location>
</feature>
<feature type="helix" evidence="11">
    <location>
        <begin position="811"/>
        <end position="816"/>
    </location>
</feature>
<feature type="strand" evidence="11">
    <location>
        <begin position="822"/>
        <end position="828"/>
    </location>
</feature>
<feature type="strand" evidence="11">
    <location>
        <begin position="830"/>
        <end position="836"/>
    </location>
</feature>
<feature type="helix" evidence="11">
    <location>
        <begin position="837"/>
        <end position="841"/>
    </location>
</feature>
<feature type="turn" evidence="11">
    <location>
        <begin position="842"/>
        <end position="845"/>
    </location>
</feature>
<feature type="helix" evidence="11">
    <location>
        <begin position="847"/>
        <end position="865"/>
    </location>
</feature>
<feature type="helix" evidence="11">
    <location>
        <begin position="867"/>
        <end position="870"/>
    </location>
</feature>
<feature type="strand" evidence="11">
    <location>
        <begin position="871"/>
        <end position="873"/>
    </location>
</feature>
<feature type="helix" evidence="11">
    <location>
        <begin position="877"/>
        <end position="883"/>
    </location>
</feature>
<feature type="strand" evidence="11">
    <location>
        <begin position="888"/>
        <end position="892"/>
    </location>
</feature>
<feature type="strand" evidence="13">
    <location>
        <begin position="897"/>
        <end position="899"/>
    </location>
</feature>
<feature type="strand" evidence="11">
    <location>
        <begin position="905"/>
        <end position="911"/>
    </location>
</feature>
<feature type="strand" evidence="11">
    <location>
        <begin position="916"/>
        <end position="918"/>
    </location>
</feature>
<feature type="strand" evidence="13">
    <location>
        <begin position="958"/>
        <end position="961"/>
    </location>
</feature>
<feature type="strand" evidence="11">
    <location>
        <begin position="963"/>
        <end position="970"/>
    </location>
</feature>
<feature type="turn" evidence="13">
    <location>
        <begin position="1009"/>
        <end position="1012"/>
    </location>
</feature>
<feature type="helix" evidence="11">
    <location>
        <begin position="1013"/>
        <end position="1016"/>
    </location>
</feature>
<feature type="helix" evidence="11">
    <location>
        <begin position="1034"/>
        <end position="1041"/>
    </location>
</feature>
<feature type="strand" evidence="11">
    <location>
        <begin position="1042"/>
        <end position="1044"/>
    </location>
</feature>
<dbReference type="EMBL" id="AF256224">
    <property type="protein sequence ID" value="AAF76139.1"/>
    <property type="molecule type" value="Genomic_DNA"/>
</dbReference>
<dbReference type="EMBL" id="AC006532">
    <property type="protein sequence ID" value="AAD20091.1"/>
    <property type="status" value="ALT_SEQ"/>
    <property type="molecule type" value="Genomic_DNA"/>
</dbReference>
<dbReference type="EMBL" id="CP002685">
    <property type="protein sequence ID" value="AEC05529.1"/>
    <property type="molecule type" value="Genomic_DNA"/>
</dbReference>
<dbReference type="EMBL" id="AY062746">
    <property type="protein sequence ID" value="AAL32824.1"/>
    <property type="molecule type" value="mRNA"/>
</dbReference>
<dbReference type="PIR" id="E84431">
    <property type="entry name" value="E84431"/>
</dbReference>
<dbReference type="RefSeq" id="NP_178307.2">
    <property type="nucleotide sequence ID" value="NM_126259.4"/>
</dbReference>
<dbReference type="PDB" id="7Y3E">
    <property type="method" value="EM"/>
    <property type="resolution" value="2.80 A"/>
    <property type="chains" value="A/B=1-1146"/>
</dbReference>
<dbReference type="PDB" id="8HYA">
    <property type="method" value="EM"/>
    <property type="resolution" value="3.40 A"/>
    <property type="chains" value="A/B=1-1146"/>
</dbReference>
<dbReference type="PDB" id="8JD9">
    <property type="method" value="EM"/>
    <property type="resolution" value="2.87 A"/>
    <property type="chains" value="A/B=28-1146"/>
</dbReference>
<dbReference type="PDB" id="8JDA">
    <property type="method" value="EM"/>
    <property type="resolution" value="3.67 A"/>
    <property type="chains" value="A/B=28-1146"/>
</dbReference>
<dbReference type="PDBsum" id="7Y3E"/>
<dbReference type="PDBsum" id="8HYA"/>
<dbReference type="PDBsum" id="8JD9"/>
<dbReference type="PDBsum" id="8JDA"/>
<dbReference type="EMDB" id="EMD-33592"/>
<dbReference type="EMDB" id="EMD-35085"/>
<dbReference type="SMR" id="Q9LKW9"/>
<dbReference type="BioGRID" id="132">
    <property type="interactions" value="3"/>
</dbReference>
<dbReference type="DIP" id="DIP-52883N"/>
<dbReference type="FunCoup" id="Q9LKW9">
    <property type="interactions" value="15"/>
</dbReference>
<dbReference type="IntAct" id="Q9LKW9">
    <property type="interactions" value="2"/>
</dbReference>
<dbReference type="STRING" id="3702.Q9LKW9"/>
<dbReference type="TCDB" id="2.A.36.7.6">
    <property type="family name" value="the monovalent cation:proton antiporter-1 (cpa1) family"/>
</dbReference>
<dbReference type="iPTMnet" id="Q9LKW9"/>
<dbReference type="PaxDb" id="3702-AT2G01980.1"/>
<dbReference type="ProteomicsDB" id="249438"/>
<dbReference type="EnsemblPlants" id="AT2G01980.1">
    <property type="protein sequence ID" value="AT2G01980.1"/>
    <property type="gene ID" value="AT2G01980"/>
</dbReference>
<dbReference type="GeneID" id="814729"/>
<dbReference type="Gramene" id="AT2G01980.1">
    <property type="protein sequence ID" value="AT2G01980.1"/>
    <property type="gene ID" value="AT2G01980"/>
</dbReference>
<dbReference type="KEGG" id="ath:AT2G01980"/>
<dbReference type="Araport" id="AT2G01980"/>
<dbReference type="TAIR" id="AT2G01980">
    <property type="gene designation" value="SOS1"/>
</dbReference>
<dbReference type="eggNOG" id="KOG1965">
    <property type="taxonomic scope" value="Eukaryota"/>
</dbReference>
<dbReference type="HOGENOM" id="CLU_008625_0_0_1"/>
<dbReference type="InParanoid" id="Q9LKW9"/>
<dbReference type="OMA" id="FDGIVKW"/>
<dbReference type="PhylomeDB" id="Q9LKW9"/>
<dbReference type="PRO" id="PR:Q9LKW9"/>
<dbReference type="Proteomes" id="UP000006548">
    <property type="component" value="Chromosome 2"/>
</dbReference>
<dbReference type="ExpressionAtlas" id="Q9LKW9">
    <property type="expression patterns" value="baseline and differential"/>
</dbReference>
<dbReference type="GO" id="GO:0009941">
    <property type="term" value="C:chloroplast envelope"/>
    <property type="evidence" value="ECO:0007005"/>
    <property type="project" value="TAIR"/>
</dbReference>
<dbReference type="GO" id="GO:0005886">
    <property type="term" value="C:plasma membrane"/>
    <property type="evidence" value="ECO:0000314"/>
    <property type="project" value="TAIR"/>
</dbReference>
<dbReference type="GO" id="GO:0015385">
    <property type="term" value="F:sodium:proton antiporter activity"/>
    <property type="evidence" value="ECO:0007669"/>
    <property type="project" value="InterPro"/>
</dbReference>
<dbReference type="GO" id="GO:0071805">
    <property type="term" value="P:potassium ion transmembrane transport"/>
    <property type="evidence" value="ECO:0000315"/>
    <property type="project" value="TAIR"/>
</dbReference>
<dbReference type="GO" id="GO:2000377">
    <property type="term" value="P:regulation of reactive oxygen species metabolic process"/>
    <property type="evidence" value="ECO:0000315"/>
    <property type="project" value="TAIR"/>
</dbReference>
<dbReference type="GO" id="GO:0042542">
    <property type="term" value="P:response to hydrogen peroxide"/>
    <property type="evidence" value="ECO:0000315"/>
    <property type="project" value="TAIR"/>
</dbReference>
<dbReference type="GO" id="GO:0006979">
    <property type="term" value="P:response to oxidative stress"/>
    <property type="evidence" value="ECO:0000315"/>
    <property type="project" value="TAIR"/>
</dbReference>
<dbReference type="GO" id="GO:0000302">
    <property type="term" value="P:response to reactive oxygen species"/>
    <property type="evidence" value="ECO:0000270"/>
    <property type="project" value="TAIR"/>
</dbReference>
<dbReference type="GO" id="GO:0009651">
    <property type="term" value="P:response to salt stress"/>
    <property type="evidence" value="ECO:0000315"/>
    <property type="project" value="TAIR"/>
</dbReference>
<dbReference type="GO" id="GO:0006814">
    <property type="term" value="P:sodium ion transport"/>
    <property type="evidence" value="ECO:0000315"/>
    <property type="project" value="TAIR"/>
</dbReference>
<dbReference type="Gene3D" id="6.10.140.1330">
    <property type="match status" value="1"/>
</dbReference>
<dbReference type="InterPro" id="IPR018422">
    <property type="entry name" value="Cation/H_exchanger_CPA1"/>
</dbReference>
<dbReference type="InterPro" id="IPR006153">
    <property type="entry name" value="Cation/H_exchanger_TM"/>
</dbReference>
<dbReference type="InterPro" id="IPR018490">
    <property type="entry name" value="cNMP-bd_dom_sf"/>
</dbReference>
<dbReference type="PANTHER" id="PTHR10110">
    <property type="entry name" value="SODIUM/HYDROGEN EXCHANGER"/>
    <property type="match status" value="1"/>
</dbReference>
<dbReference type="PANTHER" id="PTHR10110:SF86">
    <property type="entry name" value="SODIUM_HYDROGEN EXCHANGER 7"/>
    <property type="match status" value="1"/>
</dbReference>
<dbReference type="Pfam" id="PF00999">
    <property type="entry name" value="Na_H_Exchanger"/>
    <property type="match status" value="1"/>
</dbReference>
<dbReference type="SUPFAM" id="SSF51206">
    <property type="entry name" value="cAMP-binding domain-like"/>
    <property type="match status" value="1"/>
</dbReference>
<accession>Q9LKW9</accession>
<accession>Q9ZPS6</accession>
<organism>
    <name type="scientific">Arabidopsis thaliana</name>
    <name type="common">Mouse-ear cress</name>
    <dbReference type="NCBI Taxonomy" id="3702"/>
    <lineage>
        <taxon>Eukaryota</taxon>
        <taxon>Viridiplantae</taxon>
        <taxon>Streptophyta</taxon>
        <taxon>Embryophyta</taxon>
        <taxon>Tracheophyta</taxon>
        <taxon>Spermatophyta</taxon>
        <taxon>Magnoliopsida</taxon>
        <taxon>eudicotyledons</taxon>
        <taxon>Gunneridae</taxon>
        <taxon>Pentapetalae</taxon>
        <taxon>rosids</taxon>
        <taxon>malvids</taxon>
        <taxon>Brassicales</taxon>
        <taxon>Brassicaceae</taxon>
        <taxon>Camelineae</taxon>
        <taxon>Arabidopsis</taxon>
    </lineage>
</organism>
<reference key="1">
    <citation type="journal article" date="2000" name="Proc. Natl. Acad. Sci. U.S.A.">
        <title>The Arabidopsis thaliana salt tolerance gene SOS1 encodes a putative Na(+)/H(+) antiporter.</title>
        <authorList>
            <person name="Shi H."/>
            <person name="Ishitani M."/>
            <person name="Kim C."/>
            <person name="Zhu J.-K."/>
        </authorList>
    </citation>
    <scope>NUCLEOTIDE SEQUENCE [GENOMIC DNA]</scope>
    <scope>FUNCTION</scope>
    <scope>TISSUE SPECIFICITY</scope>
    <scope>INDUCTION</scope>
    <scope>MUTAGENESIS OF GLY-136; ARG-365; GLY-777 AND GLY-784</scope>
</reference>
<reference key="2">
    <citation type="journal article" date="1999" name="Nature">
        <title>Sequence and analysis of chromosome 2 of the plant Arabidopsis thaliana.</title>
        <authorList>
            <person name="Lin X."/>
            <person name="Kaul S."/>
            <person name="Rounsley S.D."/>
            <person name="Shea T.P."/>
            <person name="Benito M.-I."/>
            <person name="Town C.D."/>
            <person name="Fujii C.Y."/>
            <person name="Mason T.M."/>
            <person name="Bowman C.L."/>
            <person name="Barnstead M.E."/>
            <person name="Feldblyum T.V."/>
            <person name="Buell C.R."/>
            <person name="Ketchum K.A."/>
            <person name="Lee J.J."/>
            <person name="Ronning C.M."/>
            <person name="Koo H.L."/>
            <person name="Moffat K.S."/>
            <person name="Cronin L.A."/>
            <person name="Shen M."/>
            <person name="Pai G."/>
            <person name="Van Aken S."/>
            <person name="Umayam L."/>
            <person name="Tallon L.J."/>
            <person name="Gill J.E."/>
            <person name="Adams M.D."/>
            <person name="Carrera A.J."/>
            <person name="Creasy T.H."/>
            <person name="Goodman H.M."/>
            <person name="Somerville C.R."/>
            <person name="Copenhaver G.P."/>
            <person name="Preuss D."/>
            <person name="Nierman W.C."/>
            <person name="White O."/>
            <person name="Eisen J.A."/>
            <person name="Salzberg S.L."/>
            <person name="Fraser C.M."/>
            <person name="Venter J.C."/>
        </authorList>
    </citation>
    <scope>NUCLEOTIDE SEQUENCE [LARGE SCALE GENOMIC DNA]</scope>
    <source>
        <strain>cv. Columbia</strain>
    </source>
</reference>
<reference key="3">
    <citation type="journal article" date="2017" name="Plant J.">
        <title>Araport11: a complete reannotation of the Arabidopsis thaliana reference genome.</title>
        <authorList>
            <person name="Cheng C.Y."/>
            <person name="Krishnakumar V."/>
            <person name="Chan A.P."/>
            <person name="Thibaud-Nissen F."/>
            <person name="Schobel S."/>
            <person name="Town C.D."/>
        </authorList>
    </citation>
    <scope>GENOME REANNOTATION</scope>
    <source>
        <strain>cv. Columbia</strain>
    </source>
</reference>
<reference key="4">
    <citation type="journal article" date="2003" name="Science">
        <title>Empirical analysis of transcriptional activity in the Arabidopsis genome.</title>
        <authorList>
            <person name="Yamada K."/>
            <person name="Lim J."/>
            <person name="Dale J.M."/>
            <person name="Chen H."/>
            <person name="Shinn P."/>
            <person name="Palm C.J."/>
            <person name="Southwick A.M."/>
            <person name="Wu H.C."/>
            <person name="Kim C.J."/>
            <person name="Nguyen M."/>
            <person name="Pham P.K."/>
            <person name="Cheuk R.F."/>
            <person name="Karlin-Newmann G."/>
            <person name="Liu S.X."/>
            <person name="Lam B."/>
            <person name="Sakano H."/>
            <person name="Wu T."/>
            <person name="Yu G."/>
            <person name="Miranda M."/>
            <person name="Quach H.L."/>
            <person name="Tripp M."/>
            <person name="Chang C.H."/>
            <person name="Lee J.M."/>
            <person name="Toriumi M.J."/>
            <person name="Chan M.M."/>
            <person name="Tang C.C."/>
            <person name="Onodera C.S."/>
            <person name="Deng J.M."/>
            <person name="Akiyama K."/>
            <person name="Ansari Y."/>
            <person name="Arakawa T."/>
            <person name="Banh J."/>
            <person name="Banno F."/>
            <person name="Bowser L."/>
            <person name="Brooks S.Y."/>
            <person name="Carninci P."/>
            <person name="Chao Q."/>
            <person name="Choy N."/>
            <person name="Enju A."/>
            <person name="Goldsmith A.D."/>
            <person name="Gurjal M."/>
            <person name="Hansen N.F."/>
            <person name="Hayashizaki Y."/>
            <person name="Johnson-Hopson C."/>
            <person name="Hsuan V.W."/>
            <person name="Iida K."/>
            <person name="Karnes M."/>
            <person name="Khan S."/>
            <person name="Koesema E."/>
            <person name="Ishida J."/>
            <person name="Jiang P.X."/>
            <person name="Jones T."/>
            <person name="Kawai J."/>
            <person name="Kamiya A."/>
            <person name="Meyers C."/>
            <person name="Nakajima M."/>
            <person name="Narusaka M."/>
            <person name="Seki M."/>
            <person name="Sakurai T."/>
            <person name="Satou M."/>
            <person name="Tamse R."/>
            <person name="Vaysberg M."/>
            <person name="Wallender E.K."/>
            <person name="Wong C."/>
            <person name="Yamamura Y."/>
            <person name="Yuan S."/>
            <person name="Shinozaki K."/>
            <person name="Davis R.W."/>
            <person name="Theologis A."/>
            <person name="Ecker J.R."/>
        </authorList>
    </citation>
    <scope>NUCLEOTIDE SEQUENCE [LARGE SCALE MRNA]</scope>
    <source>
        <strain>cv. Columbia</strain>
    </source>
</reference>
<reference key="5">
    <citation type="journal article" date="1996" name="Plant Cell">
        <title>SOS1, a genetic locus essential for salt tolerance and potassium acquisition.</title>
        <authorList>
            <person name="Wu S.-J."/>
            <person name="Ding L."/>
            <person name="Zhu J.-K."/>
        </authorList>
    </citation>
    <scope>FUNCTION</scope>
    <scope>MUTAGENESIS OF ARG-365</scope>
</reference>
<reference key="6">
    <citation type="journal article" date="2002" name="Plant Cell">
        <title>The putative plasma membrane Na(+)/H(+) antiporter SOS1 controls long-distance Na(+) transport in plants.</title>
        <authorList>
            <person name="Shi H."/>
            <person name="Quintero F.J."/>
            <person name="Pardo J.M."/>
            <person name="Zhu J.-K."/>
        </authorList>
    </citation>
    <scope>FUNCTION</scope>
    <scope>SUBCELLULAR LOCATION</scope>
    <scope>TISSUE SPECIFICITY</scope>
    <scope>INDUCTION</scope>
</reference>
<reference key="7">
    <citation type="journal article" date="2002" name="Proc. Natl. Acad. Sci. U.S.A.">
        <title>Regulation of SOS1, a plasma membrane Na(+)/H(+) exchanger in Arabidopsis thaliana, by SOS2 and SOS3.</title>
        <authorList>
            <person name="Qiu Q.-S."/>
            <person name="Guo Y."/>
            <person name="Dietrich M.A."/>
            <person name="Schumaker K.S."/>
            <person name="Zhu J.-K."/>
        </authorList>
    </citation>
    <scope>FUNCTION</scope>
    <scope>REGULATION</scope>
</reference>
<reference key="8">
    <citation type="journal article" date="2002" name="Proc. Natl. Acad. Sci. U.S.A.">
        <title>Reconstitution in yeast of the Arabidopsis SOS signaling pathway for Na(+) homeostasis.</title>
        <authorList>
            <person name="Quintero F.J."/>
            <person name="Ohta M."/>
            <person name="Shi H."/>
            <person name="Zhu J.-K."/>
            <person name="Pardo J.M."/>
        </authorList>
    </citation>
    <scope>PHOSPHORYLATION</scope>
    <scope>INTERACTION WITH CIPK24/SOS2 AND CBL4/SOS3</scope>
    <scope>REGULATION</scope>
</reference>
<reference key="9">
    <citation type="journal article" date="2003" name="Mol. Cell. Proteomics">
        <title>Large-scale analysis of in vivo phosphorylated membrane proteins by immobilized metal ion affinity chromatography and mass spectrometry.</title>
        <authorList>
            <person name="Nuehse T.S."/>
            <person name="Stensballe A."/>
            <person name="Jensen O.N."/>
            <person name="Peck S.C."/>
        </authorList>
    </citation>
    <scope>IDENTIFICATION BY MASS SPECTROMETRY [LARGE SCALE ANALYSIS]</scope>
    <source>
        <strain>cv. La-0</strain>
    </source>
</reference>
<reference key="10">
    <citation type="journal article" date="2003" name="Nat. Biotechnol.">
        <title>Overexpression of a plasma membrane Na(+)/H(+) antiporter gene improves salt tolerance in Arabidopsis thaliana.</title>
        <authorList>
            <person name="Shi H."/>
            <person name="Lee B.-H."/>
            <person name="Wu S.-J."/>
            <person name="Zhu J.-K."/>
        </authorList>
    </citation>
    <scope>FUNCTION</scope>
</reference>
<reference key="11">
    <citation type="journal article" date="2003" name="Plant Physiol.">
        <title>Na(+)/H(+) exchange activity in the plasma membrane of Arabidopsis.</title>
        <authorList>
            <person name="Qiu Q.-S."/>
            <person name="Barkla B.J."/>
            <person name="Vera-Estrella R."/>
            <person name="Zhu J.-K."/>
            <person name="Schumaker K.S."/>
        </authorList>
    </citation>
    <scope>FUNCTION</scope>
    <scope>SUBCELLULAR LOCATION</scope>
    <scope>BIOPHYSICOCHEMICAL PROPERTIES</scope>
</reference>
<reference key="12">
    <citation type="journal article" date="2004" name="Plant Cell">
        <title>Phosphoproteomics of the Arabidopsis plasma membrane and a new phosphorylation site database.</title>
        <authorList>
            <person name="Nuehse T.S."/>
            <person name="Stensballe A."/>
            <person name="Jensen O.N."/>
            <person name="Peck S.C."/>
        </authorList>
    </citation>
    <scope>IDENTIFICATION BY MASS SPECTROMETRY [LARGE SCALE ANALYSIS]</scope>
</reference>
<reference key="13">
    <citation type="journal article" date="2007" name="Biochem. Biophys. Res. Commun.">
        <title>Novel subsets of the Arabidopsis plasmalemma phosphoproteome identify phosphorylation sites in secondary active transporters.</title>
        <authorList>
            <person name="Hem S."/>
            <person name="Rofidal V."/>
            <person name="Sommerer N."/>
            <person name="Rossignol M."/>
        </authorList>
    </citation>
    <scope>IDENTIFICATION BY MASS SPECTROMETRY [LARGE SCALE ANALYSIS]</scope>
</reference>
<name>NHX7_ARATH</name>
<proteinExistence type="evidence at protein level"/>
<gene>
    <name type="primary">NHX7</name>
    <name type="synonym">SOS1</name>
    <name type="ordered locus">At2g01980</name>
    <name type="ORF">F14H20.5</name>
</gene>
<keyword id="KW-0002">3D-structure</keyword>
<keyword id="KW-0050">Antiport</keyword>
<keyword id="KW-1003">Cell membrane</keyword>
<keyword id="KW-0406">Ion transport</keyword>
<keyword id="KW-0472">Membrane</keyword>
<keyword id="KW-0597">Phosphoprotein</keyword>
<keyword id="KW-0630">Potassium</keyword>
<keyword id="KW-0633">Potassium transport</keyword>
<keyword id="KW-1185">Reference proteome</keyword>
<keyword id="KW-0915">Sodium</keyword>
<keyword id="KW-0739">Sodium transport</keyword>
<keyword id="KW-0812">Transmembrane</keyword>
<keyword id="KW-1133">Transmembrane helix</keyword>
<keyword id="KW-0813">Transport</keyword>